<keyword id="KW-0238">DNA-binding</keyword>
<keyword id="KW-0539">Nucleus</keyword>
<keyword id="KW-1185">Reference proteome</keyword>
<keyword id="KW-0677">Repeat</keyword>
<keyword id="KW-0804">Transcription</keyword>
<accession>P26357</accession>
<name>TBP_SOLTU</name>
<protein>
    <recommendedName>
        <fullName>TATA-box-binding protein</fullName>
    </recommendedName>
    <alternativeName>
        <fullName>TATA sequence-binding protein</fullName>
        <shortName>TBP</shortName>
    </alternativeName>
    <alternativeName>
        <fullName>TATA-binding factor</fullName>
    </alternativeName>
    <alternativeName>
        <fullName>TATA-box factor</fullName>
    </alternativeName>
    <alternativeName>
        <fullName>Transcription initiation factor TFIID TBP subunit</fullName>
    </alternativeName>
</protein>
<evidence type="ECO:0000305" key="1"/>
<comment type="function">
    <text>General transcription factor that functions at the core of the DNA-binding multiprotein factor TFIID. Binding of TFIID to the TATA box is the initial transcriptional step of the pre-initiation complex (PIC), playing a role in the activation of eukaryotic genes transcribed by RNA polymerase II.</text>
</comment>
<comment type="subunit">
    <text>Belongs to the TFIID complex together with the TBP-associated factors (TAFs). Binds DNA as monomer.</text>
</comment>
<comment type="subcellular location">
    <subcellularLocation>
        <location>Nucleus</location>
    </subcellularLocation>
</comment>
<comment type="similarity">
    <text evidence="1">Belongs to the TBP family.</text>
</comment>
<reference key="1">
    <citation type="journal article" date="1992" name="Plant Mol. Biol.">
        <title>DNA-binding properties of cloned TATA-binding protein from potato tubers.</title>
        <authorList>
            <person name="Holdsworth M.J."/>
            <person name="Grierson C."/>
            <person name="Schuch W."/>
            <person name="Bevan M."/>
        </authorList>
    </citation>
    <scope>NUCLEOTIDE SEQUENCE [MRNA]</scope>
    <source>
        <strain>cv. Desiree</strain>
    </source>
</reference>
<sequence>MADQGLEGSQPVDLTKHPSGIVPTLQNIVSTVNLDCKLDLKAIALQARNAEYNPKRFAAVIMRIREPKTTALIFASGKMVCTGAKSEQQSKLAARKYARIIQKLGFPAKFKDFKIQNIVGSCDVKFPIRLEGLAYAHGAFSSYEPELFPGLIYRMKQPKIVLLIFVSGKIVITGAKVRDETYTAFENIYPVLTEFRKNQQ</sequence>
<feature type="chain" id="PRO_0000153982" description="TATA-box-binding protein">
    <location>
        <begin position="1"/>
        <end position="200"/>
    </location>
</feature>
<feature type="repeat" description="1">
    <location>
        <begin position="25"/>
        <end position="101"/>
    </location>
</feature>
<feature type="repeat" description="2">
    <location>
        <begin position="115"/>
        <end position="192"/>
    </location>
</feature>
<dbReference type="EMBL" id="X62494">
    <property type="protein sequence ID" value="CAA44360.1"/>
    <property type="molecule type" value="mRNA"/>
</dbReference>
<dbReference type="PIR" id="S22476">
    <property type="entry name" value="TWPO2D"/>
</dbReference>
<dbReference type="RefSeq" id="NP_001275090.1">
    <property type="nucleotide sequence ID" value="NM_001288161.1"/>
</dbReference>
<dbReference type="SMR" id="P26357"/>
<dbReference type="FunCoup" id="P26357">
    <property type="interactions" value="3172"/>
</dbReference>
<dbReference type="STRING" id="4113.P26357"/>
<dbReference type="GeneID" id="102583666"/>
<dbReference type="KEGG" id="sot:102583666"/>
<dbReference type="InParanoid" id="P26357"/>
<dbReference type="OrthoDB" id="2127950at2759"/>
<dbReference type="Proteomes" id="UP000011115">
    <property type="component" value="Unassembled WGS sequence"/>
</dbReference>
<dbReference type="GO" id="GO:0005634">
    <property type="term" value="C:nucleus"/>
    <property type="evidence" value="ECO:0007669"/>
    <property type="project" value="UniProtKB-SubCell"/>
</dbReference>
<dbReference type="GO" id="GO:0003677">
    <property type="term" value="F:DNA binding"/>
    <property type="evidence" value="ECO:0007669"/>
    <property type="project" value="UniProtKB-KW"/>
</dbReference>
<dbReference type="GO" id="GO:0016251">
    <property type="term" value="F:RNA polymerase II general transcription initiation factor activity"/>
    <property type="evidence" value="ECO:0000318"/>
    <property type="project" value="GO_Central"/>
</dbReference>
<dbReference type="GO" id="GO:0006352">
    <property type="term" value="P:DNA-templated transcription initiation"/>
    <property type="evidence" value="ECO:0000318"/>
    <property type="project" value="GO_Central"/>
</dbReference>
<dbReference type="CDD" id="cd04516">
    <property type="entry name" value="TBP_eukaryotes"/>
    <property type="match status" value="1"/>
</dbReference>
<dbReference type="FunFam" id="3.30.310.10:FF:000001">
    <property type="entry name" value="TATA-box-binding protein 2"/>
    <property type="match status" value="1"/>
</dbReference>
<dbReference type="FunFam" id="3.30.310.10:FF:000002">
    <property type="entry name" value="TATA-box-binding protein 2"/>
    <property type="match status" value="1"/>
</dbReference>
<dbReference type="Gene3D" id="3.30.310.10">
    <property type="entry name" value="TATA-Binding Protein"/>
    <property type="match status" value="2"/>
</dbReference>
<dbReference type="HAMAP" id="MF_00408">
    <property type="entry name" value="TATA_bind_prot_arch"/>
    <property type="match status" value="1"/>
</dbReference>
<dbReference type="InterPro" id="IPR000814">
    <property type="entry name" value="TBP"/>
</dbReference>
<dbReference type="InterPro" id="IPR030491">
    <property type="entry name" value="TBP_CS"/>
</dbReference>
<dbReference type="InterPro" id="IPR012295">
    <property type="entry name" value="TBP_dom_sf"/>
</dbReference>
<dbReference type="InterPro" id="IPR033710">
    <property type="entry name" value="TBP_eukaryotic"/>
</dbReference>
<dbReference type="PANTHER" id="PTHR10126">
    <property type="entry name" value="TATA-BOX BINDING PROTEIN"/>
    <property type="match status" value="1"/>
</dbReference>
<dbReference type="Pfam" id="PF00352">
    <property type="entry name" value="TBP"/>
    <property type="match status" value="2"/>
</dbReference>
<dbReference type="PRINTS" id="PR00686">
    <property type="entry name" value="TIFACTORIID"/>
</dbReference>
<dbReference type="SUPFAM" id="SSF55945">
    <property type="entry name" value="TATA-box binding protein-like"/>
    <property type="match status" value="2"/>
</dbReference>
<dbReference type="PROSITE" id="PS00351">
    <property type="entry name" value="TFIID"/>
    <property type="match status" value="2"/>
</dbReference>
<proteinExistence type="evidence at transcript level"/>
<gene>
    <name type="primary">TBP</name>
    <name type="synonym">TFIID</name>
</gene>
<organism>
    <name type="scientific">Solanum tuberosum</name>
    <name type="common">Potato</name>
    <dbReference type="NCBI Taxonomy" id="4113"/>
    <lineage>
        <taxon>Eukaryota</taxon>
        <taxon>Viridiplantae</taxon>
        <taxon>Streptophyta</taxon>
        <taxon>Embryophyta</taxon>
        <taxon>Tracheophyta</taxon>
        <taxon>Spermatophyta</taxon>
        <taxon>Magnoliopsida</taxon>
        <taxon>eudicotyledons</taxon>
        <taxon>Gunneridae</taxon>
        <taxon>Pentapetalae</taxon>
        <taxon>asterids</taxon>
        <taxon>lamiids</taxon>
        <taxon>Solanales</taxon>
        <taxon>Solanaceae</taxon>
        <taxon>Solanoideae</taxon>
        <taxon>Solaneae</taxon>
        <taxon>Solanum</taxon>
    </lineage>
</organism>